<sequence length="225" mass="24110">MTQDELKQAVAKAAVDHIAPHLEPSSIVGVGTGSTANFFIDYLAEYRNDFDGAVASSEATAERLKKHGIPVYDLNAVNEIEFYVDGADETNESLELIKGGGGALTREKIVAAVAKTFICIADESKQVGILGEFPLPVEVIPMARSHVGREIVKLGGDPVYRDGFVTDNGNIIIDIHNMDISRPLVVEEKLNNIVGVVTNGLFARRPADLLLLGTRDGVKSIARGA</sequence>
<feature type="chain" id="PRO_1000016945" description="Ribose-5-phosphate isomerase A">
    <location>
        <begin position="1"/>
        <end position="225"/>
    </location>
</feature>
<feature type="active site" description="Proton acceptor" evidence="1">
    <location>
        <position position="107"/>
    </location>
</feature>
<feature type="binding site" evidence="1">
    <location>
        <begin position="32"/>
        <end position="35"/>
    </location>
    <ligand>
        <name>substrate</name>
    </ligand>
</feature>
<feature type="binding site" evidence="1">
    <location>
        <begin position="85"/>
        <end position="88"/>
    </location>
    <ligand>
        <name>substrate</name>
    </ligand>
</feature>
<feature type="binding site" evidence="1">
    <location>
        <begin position="98"/>
        <end position="101"/>
    </location>
    <ligand>
        <name>substrate</name>
    </ligand>
</feature>
<feature type="binding site" evidence="1">
    <location>
        <position position="125"/>
    </location>
    <ligand>
        <name>substrate</name>
    </ligand>
</feature>
<keyword id="KW-0413">Isomerase</keyword>
<dbReference type="EC" id="5.3.1.6" evidence="1"/>
<dbReference type="EMBL" id="CP000514">
    <property type="protein sequence ID" value="ABM20508.1"/>
    <property type="molecule type" value="Genomic_DNA"/>
</dbReference>
<dbReference type="RefSeq" id="WP_011786849.1">
    <property type="nucleotide sequence ID" value="NC_008740.1"/>
</dbReference>
<dbReference type="SMR" id="A1U689"/>
<dbReference type="STRING" id="351348.Maqu_3437"/>
<dbReference type="GeneID" id="31822672"/>
<dbReference type="KEGG" id="maq:Maqu_3437"/>
<dbReference type="eggNOG" id="COG0120">
    <property type="taxonomic scope" value="Bacteria"/>
</dbReference>
<dbReference type="HOGENOM" id="CLU_056590_1_1_6"/>
<dbReference type="OrthoDB" id="5870696at2"/>
<dbReference type="UniPathway" id="UPA00115">
    <property type="reaction ID" value="UER00412"/>
</dbReference>
<dbReference type="Proteomes" id="UP000000998">
    <property type="component" value="Chromosome"/>
</dbReference>
<dbReference type="GO" id="GO:0005829">
    <property type="term" value="C:cytosol"/>
    <property type="evidence" value="ECO:0007669"/>
    <property type="project" value="TreeGrafter"/>
</dbReference>
<dbReference type="GO" id="GO:0004751">
    <property type="term" value="F:ribose-5-phosphate isomerase activity"/>
    <property type="evidence" value="ECO:0007669"/>
    <property type="project" value="UniProtKB-UniRule"/>
</dbReference>
<dbReference type="GO" id="GO:0006014">
    <property type="term" value="P:D-ribose metabolic process"/>
    <property type="evidence" value="ECO:0007669"/>
    <property type="project" value="TreeGrafter"/>
</dbReference>
<dbReference type="GO" id="GO:0009052">
    <property type="term" value="P:pentose-phosphate shunt, non-oxidative branch"/>
    <property type="evidence" value="ECO:0007669"/>
    <property type="project" value="UniProtKB-UniRule"/>
</dbReference>
<dbReference type="CDD" id="cd01398">
    <property type="entry name" value="RPI_A"/>
    <property type="match status" value="1"/>
</dbReference>
<dbReference type="FunFam" id="3.30.70.260:FF:000004">
    <property type="entry name" value="Ribose-5-phosphate isomerase A"/>
    <property type="match status" value="1"/>
</dbReference>
<dbReference type="FunFam" id="3.40.50.1360:FF:000001">
    <property type="entry name" value="Ribose-5-phosphate isomerase A"/>
    <property type="match status" value="1"/>
</dbReference>
<dbReference type="Gene3D" id="3.30.70.260">
    <property type="match status" value="1"/>
</dbReference>
<dbReference type="Gene3D" id="3.40.50.1360">
    <property type="match status" value="1"/>
</dbReference>
<dbReference type="HAMAP" id="MF_00170">
    <property type="entry name" value="Rib_5P_isom_A"/>
    <property type="match status" value="1"/>
</dbReference>
<dbReference type="InterPro" id="IPR037171">
    <property type="entry name" value="NagB/RpiA_transferase-like"/>
</dbReference>
<dbReference type="InterPro" id="IPR020672">
    <property type="entry name" value="Ribose5P_isomerase_typA_subgr"/>
</dbReference>
<dbReference type="InterPro" id="IPR004788">
    <property type="entry name" value="Ribose5P_isomerase_type_A"/>
</dbReference>
<dbReference type="NCBIfam" id="NF001924">
    <property type="entry name" value="PRK00702.1"/>
    <property type="match status" value="1"/>
</dbReference>
<dbReference type="NCBIfam" id="TIGR00021">
    <property type="entry name" value="rpiA"/>
    <property type="match status" value="1"/>
</dbReference>
<dbReference type="PANTHER" id="PTHR11934">
    <property type="entry name" value="RIBOSE-5-PHOSPHATE ISOMERASE"/>
    <property type="match status" value="1"/>
</dbReference>
<dbReference type="PANTHER" id="PTHR11934:SF0">
    <property type="entry name" value="RIBOSE-5-PHOSPHATE ISOMERASE"/>
    <property type="match status" value="1"/>
</dbReference>
<dbReference type="Pfam" id="PF06026">
    <property type="entry name" value="Rib_5-P_isom_A"/>
    <property type="match status" value="1"/>
</dbReference>
<dbReference type="SUPFAM" id="SSF75445">
    <property type="entry name" value="D-ribose-5-phosphate isomerase (RpiA), lid domain"/>
    <property type="match status" value="1"/>
</dbReference>
<dbReference type="SUPFAM" id="SSF100950">
    <property type="entry name" value="NagB/RpiA/CoA transferase-like"/>
    <property type="match status" value="1"/>
</dbReference>
<gene>
    <name evidence="1" type="primary">rpiA</name>
    <name type="ordered locus">Maqu_3437</name>
</gene>
<organism>
    <name type="scientific">Marinobacter nauticus (strain ATCC 700491 / DSM 11845 / VT8)</name>
    <name type="common">Marinobacter aquaeolei</name>
    <dbReference type="NCBI Taxonomy" id="351348"/>
    <lineage>
        <taxon>Bacteria</taxon>
        <taxon>Pseudomonadati</taxon>
        <taxon>Pseudomonadota</taxon>
        <taxon>Gammaproteobacteria</taxon>
        <taxon>Pseudomonadales</taxon>
        <taxon>Marinobacteraceae</taxon>
        <taxon>Marinobacter</taxon>
    </lineage>
</organism>
<name>RPIA_MARN8</name>
<evidence type="ECO:0000255" key="1">
    <source>
        <dbReference type="HAMAP-Rule" id="MF_00170"/>
    </source>
</evidence>
<reference key="1">
    <citation type="journal article" date="2011" name="Appl. Environ. Microbiol.">
        <title>Genomic potential of Marinobacter aquaeolei, a biogeochemical 'opportunitroph'.</title>
        <authorList>
            <person name="Singer E."/>
            <person name="Webb E.A."/>
            <person name="Nelson W.C."/>
            <person name="Heidelberg J.F."/>
            <person name="Ivanova N."/>
            <person name="Pati A."/>
            <person name="Edwards K.J."/>
        </authorList>
    </citation>
    <scope>NUCLEOTIDE SEQUENCE [LARGE SCALE GENOMIC DNA]</scope>
    <source>
        <strain>ATCC 700491 / DSM 11845 / VT8</strain>
    </source>
</reference>
<accession>A1U689</accession>
<protein>
    <recommendedName>
        <fullName evidence="1">Ribose-5-phosphate isomerase A</fullName>
        <ecNumber evidence="1">5.3.1.6</ecNumber>
    </recommendedName>
    <alternativeName>
        <fullName evidence="1">Phosphoriboisomerase A</fullName>
        <shortName evidence="1">PRI</shortName>
    </alternativeName>
</protein>
<comment type="function">
    <text evidence="1">Catalyzes the reversible conversion of ribose-5-phosphate to ribulose 5-phosphate.</text>
</comment>
<comment type="catalytic activity">
    <reaction evidence="1">
        <text>aldehydo-D-ribose 5-phosphate = D-ribulose 5-phosphate</text>
        <dbReference type="Rhea" id="RHEA:14657"/>
        <dbReference type="ChEBI" id="CHEBI:58121"/>
        <dbReference type="ChEBI" id="CHEBI:58273"/>
        <dbReference type="EC" id="5.3.1.6"/>
    </reaction>
</comment>
<comment type="pathway">
    <text evidence="1">Carbohydrate degradation; pentose phosphate pathway; D-ribose 5-phosphate from D-ribulose 5-phosphate (non-oxidative stage): step 1/1.</text>
</comment>
<comment type="subunit">
    <text evidence="1">Homodimer.</text>
</comment>
<comment type="similarity">
    <text evidence="1">Belongs to the ribose 5-phosphate isomerase family.</text>
</comment>
<proteinExistence type="inferred from homology"/>